<sequence length="634" mass="67711">MSKVIGIDLGTTNSCVAVREGDETKVIENSEGARTTPSMVAFTDNGERLVGQAAKRQAVTNPANTLYAVKRLIGRRYDDPTVQKDKEMVPYAIVRGDNGDAWVEARGEKYAPSQIAAYVLGKMKETAESYLGETVSQAVITVPAYFNDAQRQATRDAGKIAGLEVLRIINEPTAAALAYGLGKRDSGTVAVYDLGGGTFDVSILEISDGVIEVKSTNGDTFLGGEDFDNRIIGFLADEFKKDQGIDLRGDKLALQRLKEAAEKAKIELSSSKETEINLPFITADASGPKHLVVKLSRAKLESLVDDLIQRTLGPCRAAIKDASVSANEIDEVILVGGMTRMPKVIETVKEFFGKDPARNVNPDEVVAIGAAVQGAVLKGDVKDVLLLDVTPLSLGIETLGGVFTRLIDRNTTIPTKKSQTFSTAEDNQNAVTIKVYQGEREMAADNKLLGNFDLQGIAPAPRGVPQIEVTFDIDANGIVNVSAKDKATNKEQQIKIQASGGLSDADIDRMVKDAEANASADKAKRELVELRNSTESLIHQTEKSITEGGDKVPAADKSEAEAAIAEAREALGGENLDTLKAASEKLTQAAMKVGQGVYQAGQGAEGGAAPEGEKKDENVVDADFEDLEDDSKKH</sequence>
<gene>
    <name evidence="1" type="primary">dnaK</name>
    <name type="ordered locus">GOX0857</name>
</gene>
<feature type="chain" id="PRO_0000225968" description="Chaperone protein DnaK">
    <location>
        <begin position="1"/>
        <end position="634"/>
    </location>
</feature>
<feature type="region of interest" description="Disordered" evidence="2">
    <location>
        <begin position="601"/>
        <end position="634"/>
    </location>
</feature>
<feature type="compositionally biased region" description="Low complexity" evidence="2">
    <location>
        <begin position="601"/>
        <end position="610"/>
    </location>
</feature>
<feature type="compositionally biased region" description="Acidic residues" evidence="2">
    <location>
        <begin position="619"/>
        <end position="634"/>
    </location>
</feature>
<feature type="modified residue" description="Phosphothreonine; by autocatalysis" evidence="1">
    <location>
        <position position="198"/>
    </location>
</feature>
<feature type="sequence conflict" description="In Ref. 1; BAE46550." evidence="3" ref="1">
    <original>G</original>
    <variation>A</variation>
    <location>
        <position position="463"/>
    </location>
</feature>
<feature type="sequence conflict" description="In Ref. 1; BAE46550." evidence="3" ref="1">
    <original>EL</original>
    <variation>DV</variation>
    <location>
        <begin position="529"/>
        <end position="530"/>
    </location>
</feature>
<dbReference type="EMBL" id="AB211147">
    <property type="protein sequence ID" value="BAE46550.1"/>
    <property type="molecule type" value="Genomic_RNA"/>
</dbReference>
<dbReference type="EMBL" id="CP000009">
    <property type="protein sequence ID" value="AAW60631.1"/>
    <property type="molecule type" value="Genomic_DNA"/>
</dbReference>
<dbReference type="RefSeq" id="WP_011252427.1">
    <property type="nucleotide sequence ID" value="NC_006677.1"/>
</dbReference>
<dbReference type="SMR" id="Q5FSL5"/>
<dbReference type="STRING" id="290633.GOX0857"/>
<dbReference type="KEGG" id="gox:GOX0857"/>
<dbReference type="eggNOG" id="COG0443">
    <property type="taxonomic scope" value="Bacteria"/>
</dbReference>
<dbReference type="HOGENOM" id="CLU_005965_2_1_5"/>
<dbReference type="Proteomes" id="UP000006375">
    <property type="component" value="Chromosome"/>
</dbReference>
<dbReference type="GO" id="GO:0005524">
    <property type="term" value="F:ATP binding"/>
    <property type="evidence" value="ECO:0007669"/>
    <property type="project" value="UniProtKB-UniRule"/>
</dbReference>
<dbReference type="GO" id="GO:0140662">
    <property type="term" value="F:ATP-dependent protein folding chaperone"/>
    <property type="evidence" value="ECO:0007669"/>
    <property type="project" value="InterPro"/>
</dbReference>
<dbReference type="GO" id="GO:0051082">
    <property type="term" value="F:unfolded protein binding"/>
    <property type="evidence" value="ECO:0007669"/>
    <property type="project" value="InterPro"/>
</dbReference>
<dbReference type="CDD" id="cd11733">
    <property type="entry name" value="ASKHA_NBD_HSP70_HSPA9"/>
    <property type="match status" value="1"/>
</dbReference>
<dbReference type="FunFam" id="2.60.34.10:FF:000014">
    <property type="entry name" value="Chaperone protein DnaK HSP70"/>
    <property type="match status" value="1"/>
</dbReference>
<dbReference type="FunFam" id="3.30.30.30:FF:000003">
    <property type="entry name" value="Heat shock protein 9"/>
    <property type="match status" value="1"/>
</dbReference>
<dbReference type="FunFam" id="1.20.1270.10:FF:000001">
    <property type="entry name" value="Molecular chaperone DnaK"/>
    <property type="match status" value="1"/>
</dbReference>
<dbReference type="FunFam" id="3.30.420.40:FF:000004">
    <property type="entry name" value="Molecular chaperone DnaK"/>
    <property type="match status" value="1"/>
</dbReference>
<dbReference type="FunFam" id="3.90.640.10:FF:000003">
    <property type="entry name" value="Molecular chaperone DnaK"/>
    <property type="match status" value="1"/>
</dbReference>
<dbReference type="Gene3D" id="1.20.1270.10">
    <property type="match status" value="1"/>
</dbReference>
<dbReference type="Gene3D" id="3.30.420.40">
    <property type="match status" value="2"/>
</dbReference>
<dbReference type="Gene3D" id="3.90.640.10">
    <property type="entry name" value="Actin, Chain A, domain 4"/>
    <property type="match status" value="1"/>
</dbReference>
<dbReference type="Gene3D" id="2.60.34.10">
    <property type="entry name" value="Substrate Binding Domain Of DNAk, Chain A, domain 1"/>
    <property type="match status" value="1"/>
</dbReference>
<dbReference type="HAMAP" id="MF_00332">
    <property type="entry name" value="DnaK"/>
    <property type="match status" value="1"/>
</dbReference>
<dbReference type="InterPro" id="IPR043129">
    <property type="entry name" value="ATPase_NBD"/>
</dbReference>
<dbReference type="InterPro" id="IPR012725">
    <property type="entry name" value="Chaperone_DnaK"/>
</dbReference>
<dbReference type="InterPro" id="IPR018181">
    <property type="entry name" value="Heat_shock_70_CS"/>
</dbReference>
<dbReference type="InterPro" id="IPR029048">
    <property type="entry name" value="HSP70_C_sf"/>
</dbReference>
<dbReference type="InterPro" id="IPR029047">
    <property type="entry name" value="HSP70_peptide-bd_sf"/>
</dbReference>
<dbReference type="InterPro" id="IPR013126">
    <property type="entry name" value="Hsp_70_fam"/>
</dbReference>
<dbReference type="NCBIfam" id="NF001413">
    <property type="entry name" value="PRK00290.1"/>
    <property type="match status" value="1"/>
</dbReference>
<dbReference type="NCBIfam" id="TIGR02350">
    <property type="entry name" value="prok_dnaK"/>
    <property type="match status" value="1"/>
</dbReference>
<dbReference type="PANTHER" id="PTHR19375">
    <property type="entry name" value="HEAT SHOCK PROTEIN 70KDA"/>
    <property type="match status" value="1"/>
</dbReference>
<dbReference type="Pfam" id="PF00012">
    <property type="entry name" value="HSP70"/>
    <property type="match status" value="1"/>
</dbReference>
<dbReference type="PRINTS" id="PR00301">
    <property type="entry name" value="HEATSHOCK70"/>
</dbReference>
<dbReference type="SUPFAM" id="SSF53067">
    <property type="entry name" value="Actin-like ATPase domain"/>
    <property type="match status" value="2"/>
</dbReference>
<dbReference type="SUPFAM" id="SSF100920">
    <property type="entry name" value="Heat shock protein 70kD (HSP70), peptide-binding domain"/>
    <property type="match status" value="1"/>
</dbReference>
<dbReference type="PROSITE" id="PS00297">
    <property type="entry name" value="HSP70_1"/>
    <property type="match status" value="1"/>
</dbReference>
<dbReference type="PROSITE" id="PS00329">
    <property type="entry name" value="HSP70_2"/>
    <property type="match status" value="1"/>
</dbReference>
<dbReference type="PROSITE" id="PS01036">
    <property type="entry name" value="HSP70_3"/>
    <property type="match status" value="1"/>
</dbReference>
<proteinExistence type="inferred from homology"/>
<comment type="function">
    <text evidence="1">Acts as a chaperone.</text>
</comment>
<comment type="induction">
    <text evidence="1">By stress conditions e.g. heat shock.</text>
</comment>
<comment type="similarity">
    <text evidence="1">Belongs to the heat shock protein 70 family.</text>
</comment>
<organism>
    <name type="scientific">Gluconobacter oxydans (strain 621H)</name>
    <name type="common">Gluconobacter suboxydans</name>
    <dbReference type="NCBI Taxonomy" id="290633"/>
    <lineage>
        <taxon>Bacteria</taxon>
        <taxon>Pseudomonadati</taxon>
        <taxon>Pseudomonadota</taxon>
        <taxon>Alphaproteobacteria</taxon>
        <taxon>Acetobacterales</taxon>
        <taxon>Acetobacteraceae</taxon>
        <taxon>Gluconobacter</taxon>
    </lineage>
</organism>
<accession>Q5FSL5</accession>
<accession>Q3LG59</accession>
<protein>
    <recommendedName>
        <fullName evidence="1">Chaperone protein DnaK</fullName>
    </recommendedName>
    <alternativeName>
        <fullName evidence="1">HSP70</fullName>
    </alternativeName>
    <alternativeName>
        <fullName evidence="1">Heat shock 70 kDa protein</fullName>
    </alternativeName>
    <alternativeName>
        <fullName evidence="1">Heat shock protein 70</fullName>
    </alternativeName>
</protein>
<name>DNAK_GLUOX</name>
<keyword id="KW-0067">ATP-binding</keyword>
<keyword id="KW-0143">Chaperone</keyword>
<keyword id="KW-0547">Nucleotide-binding</keyword>
<keyword id="KW-0597">Phosphoprotein</keyword>
<keyword id="KW-1185">Reference proteome</keyword>
<keyword id="KW-0346">Stress response</keyword>
<reference key="1">
    <citation type="submission" date="2005-04" db="EMBL/GenBank/DDBJ databases">
        <title>Characterization of the groESL and the dnaKJ genes of Gluconobacter oxydans NRIC 1504.</title>
        <authorList>
            <person name="Okamoto-Kainuma A."/>
            <person name="Chen Y."/>
            <person name="Harada K."/>
            <person name="Ishikawa M."/>
            <person name="Fukaya M."/>
            <person name="Tsukamoto Y."/>
            <person name="Koizumi Y."/>
        </authorList>
    </citation>
    <scope>NUCLEOTIDE SEQUENCE [GENOMIC DNA]</scope>
    <source>
        <strain>NRIC 1504</strain>
    </source>
</reference>
<reference key="2">
    <citation type="journal article" date="2005" name="Nat. Biotechnol.">
        <title>Complete genome sequence of the acetic acid bacterium Gluconobacter oxydans.</title>
        <authorList>
            <person name="Prust C."/>
            <person name="Hoffmeister M."/>
            <person name="Liesegang H."/>
            <person name="Wiezer A."/>
            <person name="Fricke W.F."/>
            <person name="Ehrenreich A."/>
            <person name="Gottschalk G."/>
            <person name="Deppenmeier U."/>
        </authorList>
    </citation>
    <scope>NUCLEOTIDE SEQUENCE [LARGE SCALE GENOMIC DNA]</scope>
    <source>
        <strain>621H</strain>
    </source>
</reference>
<evidence type="ECO:0000255" key="1">
    <source>
        <dbReference type="HAMAP-Rule" id="MF_00332"/>
    </source>
</evidence>
<evidence type="ECO:0000256" key="2">
    <source>
        <dbReference type="SAM" id="MobiDB-lite"/>
    </source>
</evidence>
<evidence type="ECO:0000305" key="3"/>